<protein>
    <recommendedName>
        <fullName evidence="1">UPF0297 protein MGAS2096_Spy1830</fullName>
    </recommendedName>
</protein>
<comment type="similarity">
    <text evidence="1">Belongs to the UPF0297 family.</text>
</comment>
<reference key="1">
    <citation type="journal article" date="2006" name="Proc. Natl. Acad. Sci. U.S.A.">
        <title>Molecular genetic anatomy of inter- and intraserotype variation in the human bacterial pathogen group A Streptococcus.</title>
        <authorList>
            <person name="Beres S.B."/>
            <person name="Richter E.W."/>
            <person name="Nagiec M.J."/>
            <person name="Sumby P."/>
            <person name="Porcella S.F."/>
            <person name="DeLeo F.R."/>
            <person name="Musser J.M."/>
        </authorList>
    </citation>
    <scope>NUCLEOTIDE SEQUENCE [LARGE SCALE GENOMIC DNA]</scope>
    <source>
        <strain>MGAS2096</strain>
    </source>
</reference>
<proteinExistence type="inferred from homology"/>
<organism>
    <name type="scientific">Streptococcus pyogenes serotype M12 (strain MGAS2096)</name>
    <dbReference type="NCBI Taxonomy" id="370553"/>
    <lineage>
        <taxon>Bacteria</taxon>
        <taxon>Bacillati</taxon>
        <taxon>Bacillota</taxon>
        <taxon>Bacilli</taxon>
        <taxon>Lactobacillales</taxon>
        <taxon>Streptococcaceae</taxon>
        <taxon>Streptococcus</taxon>
    </lineage>
</organism>
<accession>Q1J9C9</accession>
<sequence>MGFTDETVRFKLDDGDKRQISETLTAVYHSLDEKGYNPINQIVGYVLSGDPAYVPRYNDARNQIRKYERDEIVEELVRYYLQGNGIDVK</sequence>
<evidence type="ECO:0000255" key="1">
    <source>
        <dbReference type="HAMAP-Rule" id="MF_01507"/>
    </source>
</evidence>
<dbReference type="EMBL" id="CP000261">
    <property type="protein sequence ID" value="ABF36882.1"/>
    <property type="molecule type" value="Genomic_DNA"/>
</dbReference>
<dbReference type="SMR" id="Q1J9C9"/>
<dbReference type="KEGG" id="spj:MGAS2096_Spy1830"/>
<dbReference type="HOGENOM" id="CLU_162466_0_0_9"/>
<dbReference type="HAMAP" id="MF_01507">
    <property type="entry name" value="UPF0297"/>
    <property type="match status" value="1"/>
</dbReference>
<dbReference type="InterPro" id="IPR009309">
    <property type="entry name" value="IreB"/>
</dbReference>
<dbReference type="NCBIfam" id="NF003997">
    <property type="entry name" value="PRK05473.1"/>
    <property type="match status" value="1"/>
</dbReference>
<dbReference type="PANTHER" id="PTHR40067">
    <property type="entry name" value="UPF0297 PROTEIN YRZL"/>
    <property type="match status" value="1"/>
</dbReference>
<dbReference type="PANTHER" id="PTHR40067:SF1">
    <property type="entry name" value="UPF0297 PROTEIN YRZL"/>
    <property type="match status" value="1"/>
</dbReference>
<dbReference type="Pfam" id="PF06135">
    <property type="entry name" value="IreB"/>
    <property type="match status" value="1"/>
</dbReference>
<dbReference type="PIRSF" id="PIRSF037258">
    <property type="entry name" value="DUF965_bac"/>
    <property type="match status" value="1"/>
</dbReference>
<feature type="chain" id="PRO_0000248027" description="UPF0297 protein MGAS2096_Spy1830">
    <location>
        <begin position="1"/>
        <end position="89"/>
    </location>
</feature>
<name>Y1830_STRPB</name>
<gene>
    <name type="ordered locus">MGAS2096_Spy1830</name>
</gene>